<gene>
    <name evidence="1" type="primary">ves</name>
    <name type="ordered locus">BWG_1555</name>
</gene>
<name>VES_ECOBW</name>
<accession>C4ZZ98</accession>
<proteinExistence type="inferred from homology"/>
<dbReference type="EMBL" id="CP001396">
    <property type="protein sequence ID" value="ACR62323.1"/>
    <property type="molecule type" value="Genomic_DNA"/>
</dbReference>
<dbReference type="RefSeq" id="WP_001300480.1">
    <property type="nucleotide sequence ID" value="NC_012759.1"/>
</dbReference>
<dbReference type="SMR" id="C4ZZ98"/>
<dbReference type="KEGG" id="ebw:BWG_1555"/>
<dbReference type="HOGENOM" id="CLU_090931_5_0_6"/>
<dbReference type="CDD" id="cd20293">
    <property type="entry name" value="cupin_HutD_N"/>
    <property type="match status" value="1"/>
</dbReference>
<dbReference type="Gene3D" id="2.60.120.10">
    <property type="entry name" value="Jelly Rolls"/>
    <property type="match status" value="1"/>
</dbReference>
<dbReference type="HAMAP" id="MF_01591">
    <property type="entry name" value="Ves"/>
    <property type="match status" value="1"/>
</dbReference>
<dbReference type="InterPro" id="IPR014710">
    <property type="entry name" value="RmlC-like_jellyroll"/>
</dbReference>
<dbReference type="InterPro" id="IPR011051">
    <property type="entry name" value="RmlC_Cupin_sf"/>
</dbReference>
<dbReference type="InterPro" id="IPR010282">
    <property type="entry name" value="Uncharacterised_HutD/Ves"/>
</dbReference>
<dbReference type="InterPro" id="IPR023482">
    <property type="entry name" value="Uncharacterised_Ves"/>
</dbReference>
<dbReference type="NCBIfam" id="NF008488">
    <property type="entry name" value="PRK11396.1"/>
    <property type="match status" value="1"/>
</dbReference>
<dbReference type="PANTHER" id="PTHR37943">
    <property type="entry name" value="PROTEIN VES"/>
    <property type="match status" value="1"/>
</dbReference>
<dbReference type="PANTHER" id="PTHR37943:SF1">
    <property type="entry name" value="PROTEIN VES"/>
    <property type="match status" value="1"/>
</dbReference>
<dbReference type="Pfam" id="PF05962">
    <property type="entry name" value="HutD"/>
    <property type="match status" value="1"/>
</dbReference>
<dbReference type="SUPFAM" id="SSF51182">
    <property type="entry name" value="RmlC-like cupins"/>
    <property type="match status" value="1"/>
</dbReference>
<evidence type="ECO:0000255" key="1">
    <source>
        <dbReference type="HAMAP-Rule" id="MF_01591"/>
    </source>
</evidence>
<protein>
    <recommendedName>
        <fullName evidence="1">Protein Ves</fullName>
    </recommendedName>
</protein>
<sequence>MEYFDMRKMSVNLWRNAAGETREICTFPPAKRDFYWRASIASIAANGEFSLFPGMERIVTLLEGGEMLLESADRFNHTLKPFQPFAFAADQVVKAKLTAGQMSMDFNIMTRLDVCKAKVRIAERTFTTFGSRGGVVFVINGAWQLGDKLLTTDQGACWFDGRHTLRLLQPQGKLLFSEINWLAGHSPDQVQ</sequence>
<reference key="1">
    <citation type="journal article" date="2009" name="J. Bacteriol.">
        <title>Genomic sequencing reveals regulatory mutations and recombinational events in the widely used MC4100 lineage of Escherichia coli K-12.</title>
        <authorList>
            <person name="Ferenci T."/>
            <person name="Zhou Z."/>
            <person name="Betteridge T."/>
            <person name="Ren Y."/>
            <person name="Liu Y."/>
            <person name="Feng L."/>
            <person name="Reeves P.R."/>
            <person name="Wang L."/>
        </authorList>
    </citation>
    <scope>NUCLEOTIDE SEQUENCE [LARGE SCALE GENOMIC DNA]</scope>
    <source>
        <strain>K12 / MC4100 / BW2952</strain>
    </source>
</reference>
<organism>
    <name type="scientific">Escherichia coli (strain K12 / MC4100 / BW2952)</name>
    <dbReference type="NCBI Taxonomy" id="595496"/>
    <lineage>
        <taxon>Bacteria</taxon>
        <taxon>Pseudomonadati</taxon>
        <taxon>Pseudomonadota</taxon>
        <taxon>Gammaproteobacteria</taxon>
        <taxon>Enterobacterales</taxon>
        <taxon>Enterobacteriaceae</taxon>
        <taxon>Escherichia</taxon>
    </lineage>
</organism>
<comment type="similarity">
    <text evidence="1">Belongs to the Ves family.</text>
</comment>
<feature type="chain" id="PRO_1000215648" description="Protein Ves">
    <location>
        <begin position="1"/>
        <end position="191"/>
    </location>
</feature>